<gene>
    <name evidence="1" type="primary">tatB</name>
    <name type="ordered locus">Caul_3118</name>
</gene>
<sequence length="190" mass="20001">MLPDIGGTELLVIAAVALIVVGPKDLPVLLRKLGQFIGKIRGMANEFRASFDEMARQSELDELRKEVQAMRDGQYTAPMRDAAAQAGDASHVDQVFADIDASLNSGAVKVSPFEAYQAPALEAPEPTVEIVSKPARKPPAKKAAAKPAAKAELVSKPKASAKASKGDLSVPTKPARKRAAKASTNSDITS</sequence>
<proteinExistence type="inferred from homology"/>
<dbReference type="EMBL" id="CP000927">
    <property type="protein sequence ID" value="ABZ72245.1"/>
    <property type="molecule type" value="Genomic_DNA"/>
</dbReference>
<dbReference type="SMR" id="B0T1Q6"/>
<dbReference type="STRING" id="366602.Caul_3118"/>
<dbReference type="KEGG" id="cak:Caul_3118"/>
<dbReference type="eggNOG" id="COG1826">
    <property type="taxonomic scope" value="Bacteria"/>
</dbReference>
<dbReference type="HOGENOM" id="CLU_086034_1_3_5"/>
<dbReference type="OrthoDB" id="7206969at2"/>
<dbReference type="GO" id="GO:0033281">
    <property type="term" value="C:TAT protein transport complex"/>
    <property type="evidence" value="ECO:0007669"/>
    <property type="project" value="UniProtKB-UniRule"/>
</dbReference>
<dbReference type="GO" id="GO:0008320">
    <property type="term" value="F:protein transmembrane transporter activity"/>
    <property type="evidence" value="ECO:0007669"/>
    <property type="project" value="UniProtKB-UniRule"/>
</dbReference>
<dbReference type="GO" id="GO:0043953">
    <property type="term" value="P:protein transport by the Tat complex"/>
    <property type="evidence" value="ECO:0007669"/>
    <property type="project" value="UniProtKB-UniRule"/>
</dbReference>
<dbReference type="Gene3D" id="1.20.5.3310">
    <property type="match status" value="1"/>
</dbReference>
<dbReference type="HAMAP" id="MF_00237">
    <property type="entry name" value="TatB"/>
    <property type="match status" value="1"/>
</dbReference>
<dbReference type="InterPro" id="IPR003369">
    <property type="entry name" value="TatA/B/E"/>
</dbReference>
<dbReference type="InterPro" id="IPR018448">
    <property type="entry name" value="TatB"/>
</dbReference>
<dbReference type="NCBIfam" id="TIGR01410">
    <property type="entry name" value="tatB"/>
    <property type="match status" value="1"/>
</dbReference>
<dbReference type="PANTHER" id="PTHR33162">
    <property type="entry name" value="SEC-INDEPENDENT PROTEIN TRANSLOCASE PROTEIN TATA, CHLOROPLASTIC"/>
    <property type="match status" value="1"/>
</dbReference>
<dbReference type="PANTHER" id="PTHR33162:SF1">
    <property type="entry name" value="SEC-INDEPENDENT PROTEIN TRANSLOCASE PROTEIN TATA, CHLOROPLASTIC"/>
    <property type="match status" value="1"/>
</dbReference>
<dbReference type="Pfam" id="PF02416">
    <property type="entry name" value="TatA_B_E"/>
    <property type="match status" value="1"/>
</dbReference>
<dbReference type="PRINTS" id="PR01506">
    <property type="entry name" value="TATBPROTEIN"/>
</dbReference>
<reference key="1">
    <citation type="submission" date="2008-01" db="EMBL/GenBank/DDBJ databases">
        <title>Complete sequence of chromosome of Caulobacter sp. K31.</title>
        <authorList>
            <consortium name="US DOE Joint Genome Institute"/>
            <person name="Copeland A."/>
            <person name="Lucas S."/>
            <person name="Lapidus A."/>
            <person name="Barry K."/>
            <person name="Glavina del Rio T."/>
            <person name="Dalin E."/>
            <person name="Tice H."/>
            <person name="Pitluck S."/>
            <person name="Bruce D."/>
            <person name="Goodwin L."/>
            <person name="Thompson L.S."/>
            <person name="Brettin T."/>
            <person name="Detter J.C."/>
            <person name="Han C."/>
            <person name="Schmutz J."/>
            <person name="Larimer F."/>
            <person name="Land M."/>
            <person name="Hauser L."/>
            <person name="Kyrpides N."/>
            <person name="Kim E."/>
            <person name="Stephens C."/>
            <person name="Richardson P."/>
        </authorList>
    </citation>
    <scope>NUCLEOTIDE SEQUENCE [LARGE SCALE GENOMIC DNA]</scope>
    <source>
        <strain>K31</strain>
    </source>
</reference>
<organism>
    <name type="scientific">Caulobacter sp. (strain K31)</name>
    <dbReference type="NCBI Taxonomy" id="366602"/>
    <lineage>
        <taxon>Bacteria</taxon>
        <taxon>Pseudomonadati</taxon>
        <taxon>Pseudomonadota</taxon>
        <taxon>Alphaproteobacteria</taxon>
        <taxon>Caulobacterales</taxon>
        <taxon>Caulobacteraceae</taxon>
        <taxon>Caulobacter</taxon>
    </lineage>
</organism>
<protein>
    <recommendedName>
        <fullName evidence="1">Sec-independent protein translocase protein TatB</fullName>
    </recommendedName>
</protein>
<evidence type="ECO:0000255" key="1">
    <source>
        <dbReference type="HAMAP-Rule" id="MF_00237"/>
    </source>
</evidence>
<evidence type="ECO:0000256" key="2">
    <source>
        <dbReference type="SAM" id="MobiDB-lite"/>
    </source>
</evidence>
<name>TATB_CAUSK</name>
<feature type="chain" id="PRO_1000078323" description="Sec-independent protein translocase protein TatB">
    <location>
        <begin position="1"/>
        <end position="190"/>
    </location>
</feature>
<feature type="transmembrane region" description="Helical" evidence="1">
    <location>
        <begin position="2"/>
        <end position="22"/>
    </location>
</feature>
<feature type="region of interest" description="Disordered" evidence="2">
    <location>
        <begin position="130"/>
        <end position="190"/>
    </location>
</feature>
<feature type="compositionally biased region" description="Basic residues" evidence="2">
    <location>
        <begin position="134"/>
        <end position="144"/>
    </location>
</feature>
<feature type="compositionally biased region" description="Low complexity" evidence="2">
    <location>
        <begin position="145"/>
        <end position="163"/>
    </location>
</feature>
<keyword id="KW-0997">Cell inner membrane</keyword>
<keyword id="KW-1003">Cell membrane</keyword>
<keyword id="KW-0472">Membrane</keyword>
<keyword id="KW-0653">Protein transport</keyword>
<keyword id="KW-0811">Translocation</keyword>
<keyword id="KW-0812">Transmembrane</keyword>
<keyword id="KW-1133">Transmembrane helix</keyword>
<keyword id="KW-0813">Transport</keyword>
<comment type="function">
    <text evidence="1">Part of the twin-arginine translocation (Tat) system that transports large folded proteins containing a characteristic twin-arginine motif in their signal peptide across membranes. Together with TatC, TatB is part of a receptor directly interacting with Tat signal peptides. TatB may form an oligomeric binding site that transiently accommodates folded Tat precursor proteins before their translocation.</text>
</comment>
<comment type="subunit">
    <text evidence="1">The Tat system comprises two distinct complexes: a TatABC complex, containing multiple copies of TatA, TatB and TatC subunits, and a separate TatA complex, containing only TatA subunits. Substrates initially bind to the TatABC complex, which probably triggers association of the separate TatA complex to form the active translocon.</text>
</comment>
<comment type="subcellular location">
    <subcellularLocation>
        <location evidence="1">Cell inner membrane</location>
        <topology evidence="1">Single-pass membrane protein</topology>
    </subcellularLocation>
</comment>
<comment type="similarity">
    <text evidence="1">Belongs to the TatB family.</text>
</comment>
<accession>B0T1Q6</accession>